<protein>
    <recommendedName>
        <fullName evidence="1">Lipid A acyltransferase PagP</fullName>
        <ecNumber evidence="1">2.3.1.251</ecNumber>
    </recommendedName>
    <alternativeName>
        <fullName evidence="1">Lipid A acylation protein</fullName>
    </alternativeName>
</protein>
<organism>
    <name type="scientific">Bordetella pertussis (strain CS)</name>
    <dbReference type="NCBI Taxonomy" id="1017264"/>
    <lineage>
        <taxon>Bacteria</taxon>
        <taxon>Pseudomonadati</taxon>
        <taxon>Pseudomonadota</taxon>
        <taxon>Betaproteobacteria</taxon>
        <taxon>Burkholderiales</taxon>
        <taxon>Alcaligenaceae</taxon>
        <taxon>Bordetella</taxon>
    </lineage>
</organism>
<sequence length="182" mass="20276">MTQYFRSLAFFLLPVPATAMACDGWPSWARGACQRVDQIWNEGGNDLYLTGYSWHNRAMYSSDKIRSFNELAWGGGLGKSIYDEDGDWQGLYAMAFLDSHSDIEPIAGYGFQKIGRIGADTRLGIGYTVFLTSRSDIMSRVPFPGILPLVSAGYRDATLYATYIPGGKGNGNVLFMFGRWEF</sequence>
<keyword id="KW-0012">Acyltransferase</keyword>
<keyword id="KW-0998">Cell outer membrane</keyword>
<keyword id="KW-0449">Lipoprotein</keyword>
<keyword id="KW-0472">Membrane</keyword>
<keyword id="KW-0564">Palmitate</keyword>
<keyword id="KW-0732">Signal</keyword>
<keyword id="KW-0808">Transferase</keyword>
<comment type="function">
    <text evidence="1">Transfers a fatty acid residue from the sn-1 position of a phospholipid to the N-linked hydroxyfatty acid chain on the proximal unit of lipid A or its precursors.</text>
</comment>
<comment type="catalytic activity">
    <reaction evidence="1">
        <text>a lipid A + a 1,2-diacyl-sn-glycero-3-phosphocholine = a hepta-acyl lipid A + a 2-acyl-sn-glycero-3-phosphocholine</text>
        <dbReference type="Rhea" id="RHEA:74275"/>
        <dbReference type="ChEBI" id="CHEBI:57643"/>
        <dbReference type="ChEBI" id="CHEBI:57875"/>
        <dbReference type="ChEBI" id="CHEBI:193141"/>
        <dbReference type="ChEBI" id="CHEBI:193142"/>
        <dbReference type="EC" id="2.3.1.251"/>
    </reaction>
</comment>
<comment type="catalytic activity">
    <reaction evidence="1">
        <text>a lipid IVA + a 1,2-diacyl-sn-glycero-3-phosphocholine = a lipid IVB + a 2-acyl-sn-glycero-3-phosphocholine</text>
        <dbReference type="Rhea" id="RHEA:74279"/>
        <dbReference type="ChEBI" id="CHEBI:57643"/>
        <dbReference type="ChEBI" id="CHEBI:57875"/>
        <dbReference type="ChEBI" id="CHEBI:176425"/>
        <dbReference type="ChEBI" id="CHEBI:193143"/>
        <dbReference type="EC" id="2.3.1.251"/>
    </reaction>
</comment>
<comment type="catalytic activity">
    <reaction evidence="1">
        <text>a lipid IIA + a 1,2-diacyl-sn-glycero-3-phosphocholine = a lipid IIB + a 2-acyl-sn-glycero-3-phosphocholine</text>
        <dbReference type="Rhea" id="RHEA:74283"/>
        <dbReference type="ChEBI" id="CHEBI:57643"/>
        <dbReference type="ChEBI" id="CHEBI:57875"/>
        <dbReference type="ChEBI" id="CHEBI:193144"/>
        <dbReference type="ChEBI" id="CHEBI:193145"/>
        <dbReference type="EC" id="2.3.1.251"/>
    </reaction>
</comment>
<comment type="subunit">
    <text evidence="1">Homodimer.</text>
</comment>
<comment type="subcellular location">
    <subcellularLocation>
        <location evidence="1 2">Cell outer membrane</location>
        <topology evidence="1 2">Lipid-anchor</topology>
    </subcellularLocation>
</comment>
<comment type="similarity">
    <text evidence="1 2">Belongs to the lipid A palmitoyltransferase family.</text>
</comment>
<comment type="caution">
    <text evidence="3">According to PubMed:12694617, it appears that PagP is not expressed because of disruption of the putative promoter region by insertion of an IS element.</text>
</comment>
<gene>
    <name evidence="1" type="primary">pagP</name>
    <name type="ordered locus">BPTD_2973</name>
</gene>
<dbReference type="EC" id="2.3.1.251" evidence="1"/>
<dbReference type="EMBL" id="CP002695">
    <property type="protein sequence ID" value="AEE68202.1"/>
    <property type="molecule type" value="Genomic_DNA"/>
</dbReference>
<dbReference type="RefSeq" id="WP_010931248.1">
    <property type="nucleotide sequence ID" value="NZ_CP086368.1"/>
</dbReference>
<dbReference type="SMR" id="F4LAC2"/>
<dbReference type="GeneID" id="69602929"/>
<dbReference type="KEGG" id="bpc:BPTD_2973"/>
<dbReference type="PATRIC" id="fig|1017264.3.peg.3203"/>
<dbReference type="HOGENOM" id="CLU_104099_0_0_4"/>
<dbReference type="GO" id="GO:0009279">
    <property type="term" value="C:cell outer membrane"/>
    <property type="evidence" value="ECO:0007669"/>
    <property type="project" value="UniProtKB-SubCell"/>
</dbReference>
<dbReference type="GO" id="GO:0016416">
    <property type="term" value="F:O-palmitoyltransferase activity"/>
    <property type="evidence" value="ECO:0000250"/>
    <property type="project" value="UniProtKB"/>
</dbReference>
<dbReference type="GO" id="GO:0009245">
    <property type="term" value="P:lipid A biosynthetic process"/>
    <property type="evidence" value="ECO:0000250"/>
    <property type="project" value="UniProtKB"/>
</dbReference>
<dbReference type="FunFam" id="2.40.160.20:FF:000002">
    <property type="entry name" value="Lipid A palmitoyltransferase PagP"/>
    <property type="match status" value="1"/>
</dbReference>
<dbReference type="Gene3D" id="2.40.160.20">
    <property type="match status" value="1"/>
</dbReference>
<dbReference type="HAMAP" id="MF_00837">
    <property type="entry name" value="PagP_transferase"/>
    <property type="match status" value="1"/>
</dbReference>
<dbReference type="InterPro" id="IPR009746">
    <property type="entry name" value="LipidA_acyl_PagP"/>
</dbReference>
<dbReference type="InterPro" id="IPR011250">
    <property type="entry name" value="OMP/PagP_b-brl"/>
</dbReference>
<dbReference type="NCBIfam" id="NF008271">
    <property type="entry name" value="PRK11045.1"/>
    <property type="match status" value="1"/>
</dbReference>
<dbReference type="Pfam" id="PF07017">
    <property type="entry name" value="PagP"/>
    <property type="match status" value="1"/>
</dbReference>
<dbReference type="SUPFAM" id="SSF56925">
    <property type="entry name" value="OMPA-like"/>
    <property type="match status" value="1"/>
</dbReference>
<dbReference type="PROSITE" id="PS51257">
    <property type="entry name" value="PROKAR_LIPOPROTEIN"/>
    <property type="match status" value="1"/>
</dbReference>
<name>PAGP_BORPC</name>
<feature type="signal peptide" evidence="1">
    <location>
        <begin position="1"/>
        <end position="21"/>
    </location>
</feature>
<feature type="chain" id="PRO_0000414430" description="Lipid A acyltransferase PagP">
    <location>
        <begin position="22"/>
        <end position="182"/>
    </location>
</feature>
<feature type="active site" evidence="1">
    <location>
        <position position="55"/>
    </location>
</feature>
<feature type="active site" evidence="1">
    <location>
        <position position="98"/>
    </location>
</feature>
<feature type="active site" evidence="1">
    <location>
        <position position="99"/>
    </location>
</feature>
<feature type="site" description="Role in lipopolysaccharide recognition" evidence="1">
    <location>
        <position position="64"/>
    </location>
</feature>
<feature type="lipid moiety-binding region" description="N-palmitoyl cysteine" evidence="1">
    <location>
        <position position="22"/>
    </location>
</feature>
<feature type="lipid moiety-binding region" description="S-diacylglycerol cysteine" evidence="1">
    <location>
        <position position="22"/>
    </location>
</feature>
<proteinExistence type="inferred from homology"/>
<reference key="1">
    <citation type="journal article" date="2011" name="J. Bacteriol.">
        <title>Complete genome sequence of B. pertussis CS, Chinese pertussis vaccine strain.</title>
        <authorList>
            <person name="Zhang S."/>
            <person name="Xu Y."/>
            <person name="Zhou Z."/>
            <person name="Wang S."/>
            <person name="Yang R."/>
            <person name="Wang J."/>
            <person name="Wang L."/>
        </authorList>
    </citation>
    <scope>NUCLEOTIDE SEQUENCE [LARGE SCALE GENOMIC DNA]</scope>
    <source>
        <strain>CS</strain>
    </source>
</reference>
<reference key="2">
    <citation type="journal article" date="2003" name="Mol. Microbiol.">
        <title>Bordetella bronchiseptica PagP is a Bvg-regulated lipid A palmitoyl transferase that is required for persistent colonization of the mouse respiratory tract.</title>
        <authorList>
            <person name="Preston A."/>
            <person name="Maxim E."/>
            <person name="Toland E."/>
            <person name="Pishko E.J."/>
            <person name="Harvill E.T."/>
            <person name="Caroff M."/>
            <person name="Maskell D.J."/>
        </authorList>
    </citation>
    <scope>LACK OF EXPRESSION</scope>
</reference>
<evidence type="ECO:0000255" key="1">
    <source>
        <dbReference type="HAMAP-Rule" id="MF_00837"/>
    </source>
</evidence>
<evidence type="ECO:0000305" key="2"/>
<evidence type="ECO:0000305" key="3">
    <source>
    </source>
</evidence>
<accession>F4LAC2</accession>